<sequence length="273" mass="30942">MGQKVTGGIKTVDMRDPTYRPLKQELQGLDYCKPTRLDLLLDMPPVSYDVQLLHSWNNNDRSLNVFVKEDDKLIFHRHPVAQSTDAIRGKVGYTRGLHVWQITWAMRQRGTHAVVGVATADAPLHSVGYTTLVGNNHESWGWDLGRNRLYHDGKNQPSKTYPAFLEPDETFIVPDSFLVALDMDDGTLSFIVDGQYMGVAFRGLKGKKLYPVVSAVWGHCEIRMRYLNGLDPEPLPLMDLCRRSVRLALGRERLGEIHTLPLPASLKAYLLYQ</sequence>
<keyword id="KW-0002">3D-structure</keyword>
<keyword id="KW-0963">Cytoplasm</keyword>
<keyword id="KW-0597">Phosphoprotein</keyword>
<keyword id="KW-1267">Proteomics identification</keyword>
<keyword id="KW-1185">Reference proteome</keyword>
<keyword id="KW-0833">Ubl conjugation pathway</keyword>
<accession>Q96BD6</accession>
<accession>A2A275</accession>
<accession>Q59FA1</accession>
<accession>Q5TIH9</accession>
<accession>Q9BRY9</accession>
<accession>Q9H6C5</accession>
<reference key="1">
    <citation type="submission" date="2001-07" db="EMBL/GenBank/DDBJ databases">
        <title>SOCS box proteins.</title>
        <authorList>
            <person name="Friedel E.J."/>
            <person name="Nicholson S.E."/>
            <person name="Nicola N.A."/>
            <person name="Kile B.T."/>
            <person name="Hilton D.J."/>
        </authorList>
    </citation>
    <scope>NUCLEOTIDE SEQUENCE [MRNA]</scope>
</reference>
<reference key="2">
    <citation type="journal article" date="2004" name="Nat. Genet.">
        <title>Complete sequencing and characterization of 21,243 full-length human cDNAs.</title>
        <authorList>
            <person name="Ota T."/>
            <person name="Suzuki Y."/>
            <person name="Nishikawa T."/>
            <person name="Otsuki T."/>
            <person name="Sugiyama T."/>
            <person name="Irie R."/>
            <person name="Wakamatsu A."/>
            <person name="Hayashi K."/>
            <person name="Sato H."/>
            <person name="Nagai K."/>
            <person name="Kimura K."/>
            <person name="Makita H."/>
            <person name="Sekine M."/>
            <person name="Obayashi M."/>
            <person name="Nishi T."/>
            <person name="Shibahara T."/>
            <person name="Tanaka T."/>
            <person name="Ishii S."/>
            <person name="Yamamoto J."/>
            <person name="Saito K."/>
            <person name="Kawai Y."/>
            <person name="Isono Y."/>
            <person name="Nakamura Y."/>
            <person name="Nagahari K."/>
            <person name="Murakami K."/>
            <person name="Yasuda T."/>
            <person name="Iwayanagi T."/>
            <person name="Wagatsuma M."/>
            <person name="Shiratori A."/>
            <person name="Sudo H."/>
            <person name="Hosoiri T."/>
            <person name="Kaku Y."/>
            <person name="Kodaira H."/>
            <person name="Kondo H."/>
            <person name="Sugawara M."/>
            <person name="Takahashi M."/>
            <person name="Kanda K."/>
            <person name="Yokoi T."/>
            <person name="Furuya T."/>
            <person name="Kikkawa E."/>
            <person name="Omura Y."/>
            <person name="Abe K."/>
            <person name="Kamihara K."/>
            <person name="Katsuta N."/>
            <person name="Sato K."/>
            <person name="Tanikawa M."/>
            <person name="Yamazaki M."/>
            <person name="Ninomiya K."/>
            <person name="Ishibashi T."/>
            <person name="Yamashita H."/>
            <person name="Murakawa K."/>
            <person name="Fujimori K."/>
            <person name="Tanai H."/>
            <person name="Kimata M."/>
            <person name="Watanabe M."/>
            <person name="Hiraoka S."/>
            <person name="Chiba Y."/>
            <person name="Ishida S."/>
            <person name="Ono Y."/>
            <person name="Takiguchi S."/>
            <person name="Watanabe S."/>
            <person name="Yosida M."/>
            <person name="Hotuta T."/>
            <person name="Kusano J."/>
            <person name="Kanehori K."/>
            <person name="Takahashi-Fujii A."/>
            <person name="Hara H."/>
            <person name="Tanase T.-O."/>
            <person name="Nomura Y."/>
            <person name="Togiya S."/>
            <person name="Komai F."/>
            <person name="Hara R."/>
            <person name="Takeuchi K."/>
            <person name="Arita M."/>
            <person name="Imose N."/>
            <person name="Musashino K."/>
            <person name="Yuuki H."/>
            <person name="Oshima A."/>
            <person name="Sasaki N."/>
            <person name="Aotsuka S."/>
            <person name="Yoshikawa Y."/>
            <person name="Matsunawa H."/>
            <person name="Ichihara T."/>
            <person name="Shiohata N."/>
            <person name="Sano S."/>
            <person name="Moriya S."/>
            <person name="Momiyama H."/>
            <person name="Satoh N."/>
            <person name="Takami S."/>
            <person name="Terashima Y."/>
            <person name="Suzuki O."/>
            <person name="Nakagawa S."/>
            <person name="Senoh A."/>
            <person name="Mizoguchi H."/>
            <person name="Goto Y."/>
            <person name="Shimizu F."/>
            <person name="Wakebe H."/>
            <person name="Hishigaki H."/>
            <person name="Watanabe T."/>
            <person name="Sugiyama A."/>
            <person name="Takemoto M."/>
            <person name="Kawakami B."/>
            <person name="Yamazaki M."/>
            <person name="Watanabe K."/>
            <person name="Kumagai A."/>
            <person name="Itakura S."/>
            <person name="Fukuzumi Y."/>
            <person name="Fujimori Y."/>
            <person name="Komiyama M."/>
            <person name="Tashiro H."/>
            <person name="Tanigami A."/>
            <person name="Fujiwara T."/>
            <person name="Ono T."/>
            <person name="Yamada K."/>
            <person name="Fujii Y."/>
            <person name="Ozaki K."/>
            <person name="Hirao M."/>
            <person name="Ohmori Y."/>
            <person name="Kawabata A."/>
            <person name="Hikiji T."/>
            <person name="Kobatake N."/>
            <person name="Inagaki H."/>
            <person name="Ikema Y."/>
            <person name="Okamoto S."/>
            <person name="Okitani R."/>
            <person name="Kawakami T."/>
            <person name="Noguchi S."/>
            <person name="Itoh T."/>
            <person name="Shigeta K."/>
            <person name="Senba T."/>
            <person name="Matsumura K."/>
            <person name="Nakajima Y."/>
            <person name="Mizuno T."/>
            <person name="Morinaga M."/>
            <person name="Sasaki M."/>
            <person name="Togashi T."/>
            <person name="Oyama M."/>
            <person name="Hata H."/>
            <person name="Watanabe M."/>
            <person name="Komatsu T."/>
            <person name="Mizushima-Sugano J."/>
            <person name="Satoh T."/>
            <person name="Shirai Y."/>
            <person name="Takahashi Y."/>
            <person name="Nakagawa K."/>
            <person name="Okumura K."/>
            <person name="Nagase T."/>
            <person name="Nomura N."/>
            <person name="Kikuchi H."/>
            <person name="Masuho Y."/>
            <person name="Yamashita R."/>
            <person name="Nakai K."/>
            <person name="Yada T."/>
            <person name="Nakamura Y."/>
            <person name="Ohara O."/>
            <person name="Isogai T."/>
            <person name="Sugano S."/>
        </authorList>
    </citation>
    <scope>NUCLEOTIDE SEQUENCE [LARGE SCALE MRNA]</scope>
</reference>
<reference key="3">
    <citation type="submission" date="2005-03" db="EMBL/GenBank/DDBJ databases">
        <authorList>
            <person name="Totoki Y."/>
            <person name="Toyoda A."/>
            <person name="Takeda T."/>
            <person name="Sakaki Y."/>
            <person name="Tanaka A."/>
            <person name="Yokoyama S."/>
            <person name="Ohara O."/>
            <person name="Nagase T."/>
            <person name="Kikuno R.F."/>
        </authorList>
    </citation>
    <scope>NUCLEOTIDE SEQUENCE [LARGE SCALE MRNA]</scope>
    <source>
        <tissue>Brain</tissue>
    </source>
</reference>
<reference key="4">
    <citation type="journal article" date="2006" name="Nature">
        <title>The DNA sequence and biological annotation of human chromosome 1.</title>
        <authorList>
            <person name="Gregory S.G."/>
            <person name="Barlow K.F."/>
            <person name="McLay K.E."/>
            <person name="Kaul R."/>
            <person name="Swarbreck D."/>
            <person name="Dunham A."/>
            <person name="Scott C.E."/>
            <person name="Howe K.L."/>
            <person name="Woodfine K."/>
            <person name="Spencer C.C.A."/>
            <person name="Jones M.C."/>
            <person name="Gillson C."/>
            <person name="Searle S."/>
            <person name="Zhou Y."/>
            <person name="Kokocinski F."/>
            <person name="McDonald L."/>
            <person name="Evans R."/>
            <person name="Phillips K."/>
            <person name="Atkinson A."/>
            <person name="Cooper R."/>
            <person name="Jones C."/>
            <person name="Hall R.E."/>
            <person name="Andrews T.D."/>
            <person name="Lloyd C."/>
            <person name="Ainscough R."/>
            <person name="Almeida J.P."/>
            <person name="Ambrose K.D."/>
            <person name="Anderson F."/>
            <person name="Andrew R.W."/>
            <person name="Ashwell R.I.S."/>
            <person name="Aubin K."/>
            <person name="Babbage A.K."/>
            <person name="Bagguley C.L."/>
            <person name="Bailey J."/>
            <person name="Beasley H."/>
            <person name="Bethel G."/>
            <person name="Bird C.P."/>
            <person name="Bray-Allen S."/>
            <person name="Brown J.Y."/>
            <person name="Brown A.J."/>
            <person name="Buckley D."/>
            <person name="Burton J."/>
            <person name="Bye J."/>
            <person name="Carder C."/>
            <person name="Chapman J.C."/>
            <person name="Clark S.Y."/>
            <person name="Clarke G."/>
            <person name="Clee C."/>
            <person name="Cobley V."/>
            <person name="Collier R.E."/>
            <person name="Corby N."/>
            <person name="Coville G.J."/>
            <person name="Davies J."/>
            <person name="Deadman R."/>
            <person name="Dunn M."/>
            <person name="Earthrowl M."/>
            <person name="Ellington A.G."/>
            <person name="Errington H."/>
            <person name="Frankish A."/>
            <person name="Frankland J."/>
            <person name="French L."/>
            <person name="Garner P."/>
            <person name="Garnett J."/>
            <person name="Gay L."/>
            <person name="Ghori M.R.J."/>
            <person name="Gibson R."/>
            <person name="Gilby L.M."/>
            <person name="Gillett W."/>
            <person name="Glithero R.J."/>
            <person name="Grafham D.V."/>
            <person name="Griffiths C."/>
            <person name="Griffiths-Jones S."/>
            <person name="Grocock R."/>
            <person name="Hammond S."/>
            <person name="Harrison E.S.I."/>
            <person name="Hart E."/>
            <person name="Haugen E."/>
            <person name="Heath P.D."/>
            <person name="Holmes S."/>
            <person name="Holt K."/>
            <person name="Howden P.J."/>
            <person name="Hunt A.R."/>
            <person name="Hunt S.E."/>
            <person name="Hunter G."/>
            <person name="Isherwood J."/>
            <person name="James R."/>
            <person name="Johnson C."/>
            <person name="Johnson D."/>
            <person name="Joy A."/>
            <person name="Kay M."/>
            <person name="Kershaw J.K."/>
            <person name="Kibukawa M."/>
            <person name="Kimberley A.M."/>
            <person name="King A."/>
            <person name="Knights A.J."/>
            <person name="Lad H."/>
            <person name="Laird G."/>
            <person name="Lawlor S."/>
            <person name="Leongamornlert D.A."/>
            <person name="Lloyd D.M."/>
            <person name="Loveland J."/>
            <person name="Lovell J."/>
            <person name="Lush M.J."/>
            <person name="Lyne R."/>
            <person name="Martin S."/>
            <person name="Mashreghi-Mohammadi M."/>
            <person name="Matthews L."/>
            <person name="Matthews N.S.W."/>
            <person name="McLaren S."/>
            <person name="Milne S."/>
            <person name="Mistry S."/>
            <person name="Moore M.J.F."/>
            <person name="Nickerson T."/>
            <person name="O'Dell C.N."/>
            <person name="Oliver K."/>
            <person name="Palmeiri A."/>
            <person name="Palmer S.A."/>
            <person name="Parker A."/>
            <person name="Patel D."/>
            <person name="Pearce A.V."/>
            <person name="Peck A.I."/>
            <person name="Pelan S."/>
            <person name="Phelps K."/>
            <person name="Phillimore B.J."/>
            <person name="Plumb R."/>
            <person name="Rajan J."/>
            <person name="Raymond C."/>
            <person name="Rouse G."/>
            <person name="Saenphimmachak C."/>
            <person name="Sehra H.K."/>
            <person name="Sheridan E."/>
            <person name="Shownkeen R."/>
            <person name="Sims S."/>
            <person name="Skuce C.D."/>
            <person name="Smith M."/>
            <person name="Steward C."/>
            <person name="Subramanian S."/>
            <person name="Sycamore N."/>
            <person name="Tracey A."/>
            <person name="Tromans A."/>
            <person name="Van Helmond Z."/>
            <person name="Wall M."/>
            <person name="Wallis J.M."/>
            <person name="White S."/>
            <person name="Whitehead S.L."/>
            <person name="Wilkinson J.E."/>
            <person name="Willey D.L."/>
            <person name="Williams H."/>
            <person name="Wilming L."/>
            <person name="Wray P.W."/>
            <person name="Wu Z."/>
            <person name="Coulson A."/>
            <person name="Vaudin M."/>
            <person name="Sulston J.E."/>
            <person name="Durbin R.M."/>
            <person name="Hubbard T."/>
            <person name="Wooster R."/>
            <person name="Dunham I."/>
            <person name="Carter N.P."/>
            <person name="McVean G."/>
            <person name="Ross M.T."/>
            <person name="Harrow J."/>
            <person name="Olson M.V."/>
            <person name="Beck S."/>
            <person name="Rogers J."/>
            <person name="Bentley D.R."/>
        </authorList>
    </citation>
    <scope>NUCLEOTIDE SEQUENCE [LARGE SCALE GENOMIC DNA]</scope>
</reference>
<reference key="5">
    <citation type="submission" date="2005-07" db="EMBL/GenBank/DDBJ databases">
        <authorList>
            <person name="Mural R.J."/>
            <person name="Istrail S."/>
            <person name="Sutton G.G."/>
            <person name="Florea L."/>
            <person name="Halpern A.L."/>
            <person name="Mobarry C.M."/>
            <person name="Lippert R."/>
            <person name="Walenz B."/>
            <person name="Shatkay H."/>
            <person name="Dew I."/>
            <person name="Miller J.R."/>
            <person name="Flanigan M.J."/>
            <person name="Edwards N.J."/>
            <person name="Bolanos R."/>
            <person name="Fasulo D."/>
            <person name="Halldorsson B.V."/>
            <person name="Hannenhalli S."/>
            <person name="Turner R."/>
            <person name="Yooseph S."/>
            <person name="Lu F."/>
            <person name="Nusskern D.R."/>
            <person name="Shue B.C."/>
            <person name="Zheng X.H."/>
            <person name="Zhong F."/>
            <person name="Delcher A.L."/>
            <person name="Huson D.H."/>
            <person name="Kravitz S.A."/>
            <person name="Mouchard L."/>
            <person name="Reinert K."/>
            <person name="Remington K.A."/>
            <person name="Clark A.G."/>
            <person name="Waterman M.S."/>
            <person name="Eichler E.E."/>
            <person name="Adams M.D."/>
            <person name="Hunkapiller M.W."/>
            <person name="Myers E.W."/>
            <person name="Venter J.C."/>
        </authorList>
    </citation>
    <scope>NUCLEOTIDE SEQUENCE [LARGE SCALE GENOMIC DNA]</scope>
</reference>
<reference key="6">
    <citation type="journal article" date="2004" name="Genome Res.">
        <title>The status, quality, and expansion of the NIH full-length cDNA project: the Mammalian Gene Collection (MGC).</title>
        <authorList>
            <consortium name="The MGC Project Team"/>
        </authorList>
    </citation>
    <scope>NUCLEOTIDE SEQUENCE [LARGE SCALE MRNA]</scope>
    <source>
        <tissue>Melanoma</tissue>
    </source>
</reference>
<reference key="7">
    <citation type="journal article" date="2004" name="Genes Dev.">
        <title>VHL-box and SOCS-box domains determine binding specificity for Cul2-Rbx1 and Cul5-Rbx2 modules of ubiquitin ligases.</title>
        <authorList>
            <person name="Kamura T."/>
            <person name="Maenaka K."/>
            <person name="Kotoshiba S."/>
            <person name="Matsumoto M."/>
            <person name="Kohda D."/>
            <person name="Conaway R.C."/>
            <person name="Conaway J.W."/>
            <person name="Nakayama K.I."/>
        </authorList>
    </citation>
    <scope>FUNCTION IN AN E3 UBIQUITIN-PROTEIN LIGASE COMPLEX</scope>
    <scope>IDENTIFICATION BY MASS SPECTROMETRY</scope>
    <scope>INTERACTION WITH CUL5; RNF7; ELOB AND ELOC</scope>
    <scope>MUTAGENESIS OF 260-LEU--PRO-263</scope>
</reference>
<reference key="8">
    <citation type="journal article" date="2005" name="J. Biol. Chem.">
        <title>The SPRY domain-containing SOCS box protein 1 (SSB-1) interacts with MET and enhances the hepatocyte growth factor-induced Erk-Elk-1-serum response element pathway.</title>
        <authorList>
            <person name="Wang D."/>
            <person name="Li Z."/>
            <person name="Messing E.M."/>
            <person name="Wu G."/>
        </authorList>
    </citation>
    <scope>INTERACTION WITH MET AND RASA1</scope>
    <scope>PHOSPHORYLATION AT TYR-31</scope>
    <scope>MUTAGENESIS OF TYR-31</scope>
    <scope>DOMAIN</scope>
</reference>
<reference key="9">
    <citation type="journal article" date="2006" name="Mol. Cell">
        <title>Structural basis for protein recognition by B30.2/SPRY domains.</title>
        <authorList>
            <person name="Woo J.S."/>
            <person name="Suh H.Y."/>
            <person name="Park S.Y."/>
            <person name="Oh B.H."/>
        </authorList>
    </citation>
    <scope>INTERACTION WITH ELONGIN BC COMPLEX AND PAWR</scope>
</reference>
<reference key="10">
    <citation type="journal article" date="2011" name="J. Biol. Chem.">
        <title>Regulation of inducible nitric-oxide synthase by the SPRY domain- and SOCS box-containing proteins.</title>
        <authorList>
            <person name="Nishiya T."/>
            <person name="Matsumoto K."/>
            <person name="Maekawa S."/>
            <person name="Kajita E."/>
            <person name="Horinouchi T."/>
            <person name="Fujimuro M."/>
            <person name="Ogasawara K."/>
            <person name="Uehara T."/>
            <person name="Miwa S."/>
        </authorList>
    </citation>
    <scope>FUNCTION</scope>
    <scope>INTERACTION WITH NOS2</scope>
    <scope>SUBCELLULAR LOCATION</scope>
    <scope>DOMAIN SOCS BOX</scope>
</reference>
<reference key="11">
    <citation type="journal article" date="2017" name="Mol. Biol. Cell">
        <title>Ubiquitin ligase SPSB4 diminishes cell repulsive responses mediated by EphB2.</title>
        <authorList>
            <person name="Okumura F."/>
            <person name="Joo-Okumura A."/>
            <person name="Obara K."/>
            <person name="Petersen A."/>
            <person name="Nishikimi A."/>
            <person name="Fukui Y."/>
            <person name="Nakatsukasa K."/>
            <person name="Kamura T."/>
        </authorList>
    </citation>
    <scope>INTERACTION WITH EPHB2</scope>
</reference>
<reference evidence="11 12" key="12">
    <citation type="journal article" date="2010" name="J. Mol. Biol.">
        <title>Structural basis for Par-4 recognition by the SPRY domain- and SOCS box-containing proteins SPSB1, SPSB2, and SPSB4.</title>
        <authorList>
            <person name="Filippakopoulos P."/>
            <person name="Low A."/>
            <person name="Sharpe T.D."/>
            <person name="Uppenberg J."/>
            <person name="Yao S."/>
            <person name="Kuang Z."/>
            <person name="Savitsky P."/>
            <person name="Lewis R.S."/>
            <person name="Nicholson S.E."/>
            <person name="Norton R.S."/>
            <person name="Bullock A.N."/>
        </authorList>
    </citation>
    <scope>X-RAY CRYSTALLOGRAPHY (1.79 ANGSTROMS) OF 30-233 IN COMPLEX WITH PAWR AND DROSOPHILA VAS</scope>
    <scope>INTERACTION WITH PAWR</scope>
    <scope>DOMAIN</scope>
</reference>
<feature type="chain" id="PRO_0000238472" description="SPRY domain-containing SOCS box protein 1">
    <location>
        <begin position="1"/>
        <end position="273"/>
    </location>
</feature>
<feature type="domain" description="B30.2/SPRY" evidence="3">
    <location>
        <begin position="33"/>
        <end position="231"/>
    </location>
</feature>
<feature type="domain" description="SOCS box" evidence="2">
    <location>
        <begin position="232"/>
        <end position="273"/>
    </location>
</feature>
<feature type="modified residue" description="Phosphotyrosine; by MET" evidence="5">
    <location>
        <position position="31"/>
    </location>
</feature>
<feature type="mutagenesis site" description="Loss of phosphorylation." evidence="5">
    <original>Y</original>
    <variation>F</variation>
    <location>
        <position position="31"/>
    </location>
</feature>
<feature type="mutagenesis site" description="Abolishes interaction with RNF7 and CUL5." evidence="4">
    <original>LPLP</original>
    <variation>AAAA</variation>
    <location>
        <begin position="260"/>
        <end position="263"/>
    </location>
</feature>
<feature type="sequence conflict" description="In Ref. 3; BAD92796." evidence="10" ref="3">
    <original>M</original>
    <variation>L</variation>
    <location>
        <position position="14"/>
    </location>
</feature>
<feature type="sequence conflict" description="In Ref. 2; BAB15335." evidence="10" ref="2">
    <original>L</original>
    <variation>P</variation>
    <location>
        <position position="73"/>
    </location>
</feature>
<feature type="helix" evidence="13">
    <location>
        <begin position="36"/>
        <end position="42"/>
    </location>
</feature>
<feature type="helix" evidence="13">
    <location>
        <begin position="48"/>
        <end position="53"/>
    </location>
</feature>
<feature type="strand" evidence="13">
    <location>
        <begin position="55"/>
        <end position="61"/>
    </location>
</feature>
<feature type="strand" evidence="13">
    <location>
        <begin position="65"/>
        <end position="68"/>
    </location>
</feature>
<feature type="strand" evidence="13">
    <location>
        <begin position="71"/>
        <end position="77"/>
    </location>
</feature>
<feature type="strand" evidence="13">
    <location>
        <begin position="83"/>
        <end position="90"/>
    </location>
</feature>
<feature type="strand" evidence="13">
    <location>
        <begin position="95"/>
        <end position="103"/>
    </location>
</feature>
<feature type="helix" evidence="13">
    <location>
        <begin position="106"/>
        <end position="108"/>
    </location>
</feature>
<feature type="strand" evidence="13">
    <location>
        <begin position="114"/>
        <end position="118"/>
    </location>
</feature>
<feature type="strand" evidence="13">
    <location>
        <begin position="125"/>
        <end position="129"/>
    </location>
</feature>
<feature type="strand" evidence="13">
    <location>
        <begin position="139"/>
        <end position="143"/>
    </location>
</feature>
<feature type="turn" evidence="13">
    <location>
        <begin position="144"/>
        <end position="147"/>
    </location>
</feature>
<feature type="strand" evidence="13">
    <location>
        <begin position="148"/>
        <end position="152"/>
    </location>
</feature>
<feature type="turn" evidence="13">
    <location>
        <begin position="153"/>
        <end position="155"/>
    </location>
</feature>
<feature type="strand" evidence="13">
    <location>
        <begin position="159"/>
        <end position="162"/>
    </location>
</feature>
<feature type="strand" evidence="13">
    <location>
        <begin position="175"/>
        <end position="182"/>
    </location>
</feature>
<feature type="turn" evidence="13">
    <location>
        <begin position="183"/>
        <end position="186"/>
    </location>
</feature>
<feature type="strand" evidence="13">
    <location>
        <begin position="187"/>
        <end position="192"/>
    </location>
</feature>
<feature type="strand" evidence="13">
    <location>
        <begin position="195"/>
        <end position="201"/>
    </location>
</feature>
<feature type="strand" evidence="13">
    <location>
        <begin position="209"/>
        <end position="215"/>
    </location>
</feature>
<feature type="strand" evidence="13">
    <location>
        <begin position="221"/>
        <end position="230"/>
    </location>
</feature>
<gene>
    <name type="primary">SPSB1</name>
    <name type="synonym">SSB1</name>
</gene>
<name>SPSB1_HUMAN</name>
<protein>
    <recommendedName>
        <fullName>SPRY domain-containing SOCS box protein 1</fullName>
        <shortName>SSB-1</shortName>
    </recommendedName>
</protein>
<evidence type="ECO:0000250" key="1"/>
<evidence type="ECO:0000255" key="2">
    <source>
        <dbReference type="PROSITE-ProRule" id="PRU00194"/>
    </source>
</evidence>
<evidence type="ECO:0000255" key="3">
    <source>
        <dbReference type="PROSITE-ProRule" id="PRU00548"/>
    </source>
</evidence>
<evidence type="ECO:0000269" key="4">
    <source>
    </source>
</evidence>
<evidence type="ECO:0000269" key="5">
    <source>
    </source>
</evidence>
<evidence type="ECO:0000269" key="6">
    <source>
    </source>
</evidence>
<evidence type="ECO:0000269" key="7">
    <source>
    </source>
</evidence>
<evidence type="ECO:0000269" key="8">
    <source>
    </source>
</evidence>
<evidence type="ECO:0000269" key="9">
    <source>
    </source>
</evidence>
<evidence type="ECO:0000305" key="10"/>
<evidence type="ECO:0007744" key="11">
    <source>
        <dbReference type="PDB" id="2JK9"/>
    </source>
</evidence>
<evidence type="ECO:0007744" key="12">
    <source>
        <dbReference type="PDB" id="3F2O"/>
    </source>
</evidence>
<evidence type="ECO:0007829" key="13">
    <source>
        <dbReference type="PDB" id="2JK9"/>
    </source>
</evidence>
<comment type="function">
    <text evidence="4 8">Substrate recognition component of a SCF-like ECS (Elongin BC-CUL2/5-SOCS-box protein) E3 ubiquitin-protein ligase complex which mediates the ubiquitination and subsequent proteasomal degradation of target proteins (PubMed:15601820, PubMed:21199876). Negatively regulates nitric oxide (NO) production and limits cellular toxicity in activated macrophages by mediating the ubiquitination and proteasomal degradation of NOS2 (PubMed:21199876). Acts as a bridge which links NOS2 with the ECS E3 ubiquitin ligase complex components ELOC and CUL5 (PubMed:21199876).</text>
</comment>
<comment type="pathway">
    <text>Protein modification; protein ubiquitination.</text>
</comment>
<comment type="subunit">
    <text evidence="4 5 6 7 8 9">Component of the probable ECS(SPSB1) E3 ubiquitin-protein ligase complex which contains CUL5, RNF7/RBX2, Elongin BC complex and SPSB1 (PubMed:15601820). Interacts with CUL5, RNF7, ELOB and ELOC (PubMed:15601820). Directly interacts with MET tyrosine kinase domain in the presence and in the absence of HGF, however HGF treatment has a positive effect on this interaction (PubMed:15713673). When phosphorylated, interacts with RASA1 without affecting its stability (PubMed:15713673). Interacts (via B30.2/SPRY domain) with PAWR; this interaction is direct and occurs in association with the Elongin BC complex (PubMed:17189197, PubMed:20561531). Interacts with NOS2 (PubMed:21199876). Interacts with EPHB2 (PubMed:28931592).</text>
</comment>
<comment type="interaction">
    <interactant intactId="EBI-2659201">
        <id>Q96BD6</id>
    </interactant>
    <interactant intactId="EBI-6657604">
        <id>P54922</id>
        <label>ADPRH</label>
    </interactant>
    <organismsDiffer>false</organismsDiffer>
    <experiments>3</experiments>
</comment>
<comment type="interaction">
    <interactant intactId="EBI-2659201">
        <id>Q96BD6</id>
    </interactant>
    <interactant intactId="EBI-718729">
        <id>P55212</id>
        <label>CASP6</label>
    </interactant>
    <organismsDiffer>false</organismsDiffer>
    <experiments>3</experiments>
</comment>
<comment type="interaction">
    <interactant intactId="EBI-2659201">
        <id>Q96BD6</id>
    </interactant>
    <interactant intactId="EBI-6624398">
        <id>P06307</id>
        <label>CCK</label>
    </interactant>
    <organismsDiffer>false</organismsDiffer>
    <experiments>3</experiments>
</comment>
<comment type="interaction">
    <interactant intactId="EBI-2659201">
        <id>Q96BD6</id>
    </interactant>
    <interactant intactId="EBI-6875961">
        <id>P02489</id>
        <label>CRYAA</label>
    </interactant>
    <organismsDiffer>false</organismsDiffer>
    <experiments>3</experiments>
</comment>
<comment type="interaction">
    <interactant intactId="EBI-2659201">
        <id>Q96BD6</id>
    </interactant>
    <interactant intactId="EBI-473886">
        <id>O00291</id>
        <label>HIP1</label>
    </interactant>
    <organismsDiffer>false</organismsDiffer>
    <experiments>3</experiments>
</comment>
<comment type="interaction">
    <interactant intactId="EBI-2659201">
        <id>Q96BD6</id>
    </interactant>
    <interactant intactId="EBI-712096">
        <id>P30519</id>
        <label>HMOX2</label>
    </interactant>
    <organismsDiffer>false</organismsDiffer>
    <experiments>3</experiments>
</comment>
<comment type="interaction">
    <interactant intactId="EBI-2659201">
        <id>Q96BD6</id>
    </interactant>
    <interactant intactId="EBI-710124">
        <id>O60341</id>
        <label>KDM1A</label>
    </interactant>
    <organismsDiffer>false</organismsDiffer>
    <experiments>2</experiments>
</comment>
<comment type="interaction">
    <interactant intactId="EBI-2659201">
        <id>Q96BD6</id>
    </interactant>
    <interactant intactId="EBI-21591415">
        <id>P13473-2</id>
        <label>LAMP2</label>
    </interactant>
    <organismsDiffer>false</organismsDiffer>
    <experiments>3</experiments>
</comment>
<comment type="interaction">
    <interactant intactId="EBI-2659201">
        <id>Q96BD6</id>
    </interactant>
    <interactant intactId="EBI-1307">
        <id>Q13153</id>
        <label>PAK1</label>
    </interactant>
    <organismsDiffer>false</organismsDiffer>
    <experiments>3</experiments>
</comment>
<comment type="interaction">
    <interactant intactId="EBI-2659201">
        <id>Q96BD6</id>
    </interactant>
    <interactant intactId="EBI-595869">
        <id>Q96IZ0</id>
        <label>PAWR</label>
    </interactant>
    <organismsDiffer>false</organismsDiffer>
    <experiments>2</experiments>
</comment>
<comment type="interaction">
    <interactant intactId="EBI-2659201">
        <id>Q96BD6</id>
    </interactant>
    <interactant intactId="EBI-716404">
        <id>P16284</id>
        <label>PECAM1</label>
    </interactant>
    <organismsDiffer>false</organismsDiffer>
    <experiments>3</experiments>
</comment>
<comment type="interaction">
    <interactant intactId="EBI-2659201">
        <id>Q96BD6</id>
    </interactant>
    <interactant intactId="EBI-21251460">
        <id>O60260-5</id>
        <label>PRKN</label>
    </interactant>
    <organismsDiffer>false</organismsDiffer>
    <experiments>3</experiments>
</comment>
<comment type="interaction">
    <interactant intactId="EBI-2659201">
        <id>Q96BD6</id>
    </interactant>
    <interactant intactId="EBI-78738">
        <id>Q99873</id>
        <label>PRMT1</label>
    </interactant>
    <organismsDiffer>false</organismsDiffer>
    <experiments>2</experiments>
</comment>
<comment type="interaction">
    <interactant intactId="EBI-2659201">
        <id>Q96BD6</id>
    </interactant>
    <interactant intactId="EBI-912440">
        <id>Q96LA8</id>
        <label>PRMT6</label>
    </interactant>
    <organismsDiffer>false</organismsDiffer>
    <experiments>2</experiments>
</comment>
<comment type="interaction">
    <interactant intactId="EBI-2659201">
        <id>Q96BD6</id>
    </interactant>
    <interactant intactId="EBI-286642">
        <id>P62826</id>
        <label>RAN</label>
    </interactant>
    <organismsDiffer>false</organismsDiffer>
    <experiments>3</experiments>
</comment>
<comment type="interaction">
    <interactant intactId="EBI-2659201">
        <id>Q96BD6</id>
    </interactant>
    <interactant intactId="EBI-396669">
        <id>Q9Y3C5</id>
        <label>RNF11</label>
    </interactant>
    <organismsDiffer>false</organismsDiffer>
    <experiments>3</experiments>
</comment>
<comment type="interaction">
    <interactant intactId="EBI-2659201">
        <id>Q96BD6</id>
    </interactant>
    <interactant intactId="EBI-1045459">
        <id>O95863</id>
        <label>SNAI1</label>
    </interactant>
    <organismsDiffer>false</organismsDiffer>
    <experiments>3</experiments>
</comment>
<comment type="interaction">
    <interactant intactId="EBI-2659201">
        <id>Q96BD6</id>
    </interactant>
    <interactant intactId="EBI-349968">
        <id>O43463</id>
        <label>SUV39H1</label>
    </interactant>
    <organismsDiffer>false</organismsDiffer>
    <experiments>2</experiments>
</comment>
<comment type="interaction">
    <interactant intactId="EBI-2659201">
        <id>Q96BD6</id>
    </interactant>
    <interactant intactId="EBI-372899">
        <id>Q13148</id>
        <label>TARDBP</label>
    </interactant>
    <organismsDiffer>false</organismsDiffer>
    <experiments>3</experiments>
</comment>
<comment type="interaction">
    <interactant intactId="EBI-2659201">
        <id>Q96BD6</id>
    </interactant>
    <interactant intactId="EBI-473850">
        <id>P61086</id>
        <label>UBE2K</label>
    </interactant>
    <organismsDiffer>false</organismsDiffer>
    <experiments>3</experiments>
</comment>
<comment type="interaction">
    <interactant intactId="EBI-2659201">
        <id>Q96BD6</id>
    </interactant>
    <interactant intactId="EBI-353844">
        <id>P08670</id>
        <label>VIM</label>
    </interactant>
    <organismsDiffer>false</organismsDiffer>
    <experiments>3</experiments>
</comment>
<comment type="interaction">
    <interactant intactId="EBI-2659201">
        <id>Q96BD6</id>
    </interactant>
    <interactant intactId="EBI-12246480">
        <id>O00534</id>
        <label>VWA5A</label>
    </interactant>
    <organismsDiffer>false</organismsDiffer>
    <experiments>3</experiments>
</comment>
<comment type="interaction">
    <interactant intactId="EBI-2659201">
        <id>Q96BD6</id>
    </interactant>
    <interactant intactId="EBI-134067">
        <id>P09052</id>
        <label>vas</label>
    </interactant>
    <organismsDiffer>true</organismsDiffer>
    <experiments>2</experiments>
</comment>
<comment type="subcellular location">
    <subcellularLocation>
        <location evidence="10">Cytoplasm</location>
    </subcellularLocation>
    <subcellularLocation>
        <location evidence="8">Cytoplasm</location>
        <location evidence="8">Cytosol</location>
    </subcellularLocation>
    <text evidence="8">Exhibits a diffuse cytosolic localization.</text>
</comment>
<comment type="domain">
    <text evidence="1 8">The SOCS box domain mediates the interaction with the Elongin BC complex, an adapter module in different E3 ubiquitin ligase complexes (By similarity). Essential for its ability to link NOS2 and the ECS E3 ubiquitin ligase complex components ELOC and CUL5.</text>
</comment>
<comment type="domain">
    <text evidence="5 7">The B30.2/SPRY domain is involved in MET and PAWR binding (PubMed:15713673, PubMed:20561531).</text>
</comment>
<comment type="similarity">
    <text evidence="10">Belongs to the SPSB family.</text>
</comment>
<comment type="sequence caution" evidence="10">
    <conflict type="erroneous initiation">
        <sequence resource="EMBL-CDS" id="BAD92796"/>
    </conflict>
</comment>
<dbReference type="EMBL" id="AF403026">
    <property type="protein sequence ID" value="AAL57345.1"/>
    <property type="molecule type" value="mRNA"/>
</dbReference>
<dbReference type="EMBL" id="AK026046">
    <property type="protein sequence ID" value="BAB15335.1"/>
    <property type="molecule type" value="mRNA"/>
</dbReference>
<dbReference type="EMBL" id="AB209559">
    <property type="protein sequence ID" value="BAD92796.1"/>
    <property type="status" value="ALT_INIT"/>
    <property type="molecule type" value="mRNA"/>
</dbReference>
<dbReference type="EMBL" id="AL358252">
    <property type="status" value="NOT_ANNOTATED_CDS"/>
    <property type="molecule type" value="Genomic_DNA"/>
</dbReference>
<dbReference type="EMBL" id="AL008734">
    <property type="status" value="NOT_ANNOTATED_CDS"/>
    <property type="molecule type" value="Genomic_DNA"/>
</dbReference>
<dbReference type="EMBL" id="CH471130">
    <property type="protein sequence ID" value="EAW71617.1"/>
    <property type="molecule type" value="Genomic_DNA"/>
</dbReference>
<dbReference type="EMBL" id="BC005852">
    <property type="protein sequence ID" value="AAH05852.2"/>
    <property type="molecule type" value="mRNA"/>
</dbReference>
<dbReference type="EMBL" id="BC015711">
    <property type="protein sequence ID" value="AAH15711.1"/>
    <property type="molecule type" value="mRNA"/>
</dbReference>
<dbReference type="CCDS" id="CCDS102.1"/>
<dbReference type="RefSeq" id="NP_079382.2">
    <property type="nucleotide sequence ID" value="NM_025106.3"/>
</dbReference>
<dbReference type="PDB" id="2JK9">
    <property type="method" value="X-ray"/>
    <property type="resolution" value="1.79 A"/>
    <property type="chains" value="A=30-231"/>
</dbReference>
<dbReference type="PDB" id="3F2O">
    <property type="method" value="X-ray"/>
    <property type="resolution" value="2.05 A"/>
    <property type="chains" value="A/B=31-233"/>
</dbReference>
<dbReference type="PDBsum" id="2JK9"/>
<dbReference type="PDBsum" id="3F2O"/>
<dbReference type="SMR" id="Q96BD6"/>
<dbReference type="BioGRID" id="123158">
    <property type="interactions" value="37"/>
</dbReference>
<dbReference type="ELM" id="Q96BD6"/>
<dbReference type="FunCoup" id="Q96BD6">
    <property type="interactions" value="411"/>
</dbReference>
<dbReference type="IntAct" id="Q96BD6">
    <property type="interactions" value="33"/>
</dbReference>
<dbReference type="MINT" id="Q96BD6"/>
<dbReference type="STRING" id="9606.ENSP00000330221"/>
<dbReference type="GlyGen" id="Q96BD6">
    <property type="glycosylation" value="1 site, 1 O-linked glycan (1 site)"/>
</dbReference>
<dbReference type="iPTMnet" id="Q96BD6"/>
<dbReference type="PhosphoSitePlus" id="Q96BD6"/>
<dbReference type="BioMuta" id="SPSB1"/>
<dbReference type="DMDM" id="74731225"/>
<dbReference type="MassIVE" id="Q96BD6"/>
<dbReference type="PaxDb" id="9606-ENSP00000330221"/>
<dbReference type="PeptideAtlas" id="Q96BD6"/>
<dbReference type="ProteomicsDB" id="76068"/>
<dbReference type="Antibodypedia" id="1144">
    <property type="antibodies" value="63 antibodies from 19 providers"/>
</dbReference>
<dbReference type="DNASU" id="80176"/>
<dbReference type="Ensembl" id="ENST00000328089.11">
    <property type="protein sequence ID" value="ENSP00000330221.6"/>
    <property type="gene ID" value="ENSG00000171621.14"/>
</dbReference>
<dbReference type="Ensembl" id="ENST00000357898.3">
    <property type="protein sequence ID" value="ENSP00000350573.3"/>
    <property type="gene ID" value="ENSG00000171621.14"/>
</dbReference>
<dbReference type="Ensembl" id="ENST00000377399.2">
    <property type="protein sequence ID" value="ENSP00000366616.2"/>
    <property type="gene ID" value="ENSG00000171621.14"/>
</dbReference>
<dbReference type="GeneID" id="80176"/>
<dbReference type="KEGG" id="hsa:80176"/>
<dbReference type="MANE-Select" id="ENST00000328089.11">
    <property type="protein sequence ID" value="ENSP00000330221.6"/>
    <property type="RefSeq nucleotide sequence ID" value="NM_025106.4"/>
    <property type="RefSeq protein sequence ID" value="NP_079382.2"/>
</dbReference>
<dbReference type="UCSC" id="uc001apv.4">
    <property type="organism name" value="human"/>
</dbReference>
<dbReference type="AGR" id="HGNC:30628"/>
<dbReference type="CTD" id="80176"/>
<dbReference type="DisGeNET" id="80176"/>
<dbReference type="GeneCards" id="SPSB1"/>
<dbReference type="HGNC" id="HGNC:30628">
    <property type="gene designation" value="SPSB1"/>
</dbReference>
<dbReference type="HPA" id="ENSG00000171621">
    <property type="expression patterns" value="Low tissue specificity"/>
</dbReference>
<dbReference type="MIM" id="611657">
    <property type="type" value="gene"/>
</dbReference>
<dbReference type="neXtProt" id="NX_Q96BD6"/>
<dbReference type="OpenTargets" id="ENSG00000171621"/>
<dbReference type="PharmGKB" id="PA142670871"/>
<dbReference type="VEuPathDB" id="HostDB:ENSG00000171621"/>
<dbReference type="eggNOG" id="KOG3953">
    <property type="taxonomic scope" value="Eukaryota"/>
</dbReference>
<dbReference type="GeneTree" id="ENSGT01030000234629"/>
<dbReference type="HOGENOM" id="CLU_046756_0_1_1"/>
<dbReference type="InParanoid" id="Q96BD6"/>
<dbReference type="OMA" id="SESYGWD"/>
<dbReference type="OrthoDB" id="5547302at2759"/>
<dbReference type="PAN-GO" id="Q96BD6">
    <property type="GO annotations" value="2 GO annotations based on evolutionary models"/>
</dbReference>
<dbReference type="PhylomeDB" id="Q96BD6"/>
<dbReference type="TreeFam" id="TF312822"/>
<dbReference type="PathwayCommons" id="Q96BD6"/>
<dbReference type="Reactome" id="R-HSA-8951664">
    <property type="pathway name" value="Neddylation"/>
</dbReference>
<dbReference type="Reactome" id="R-HSA-983168">
    <property type="pathway name" value="Antigen processing: Ubiquitination &amp; Proteasome degradation"/>
</dbReference>
<dbReference type="SignaLink" id="Q96BD6"/>
<dbReference type="UniPathway" id="UPA00143"/>
<dbReference type="BioGRID-ORCS" id="80176">
    <property type="hits" value="13 hits in 1152 CRISPR screens"/>
</dbReference>
<dbReference type="ChiTaRS" id="SPSB1">
    <property type="organism name" value="human"/>
</dbReference>
<dbReference type="EvolutionaryTrace" id="Q96BD6"/>
<dbReference type="GeneWiki" id="SPSB1"/>
<dbReference type="GenomeRNAi" id="80176"/>
<dbReference type="Pharos" id="Q96BD6">
    <property type="development level" value="Tbio"/>
</dbReference>
<dbReference type="PRO" id="PR:Q96BD6"/>
<dbReference type="Proteomes" id="UP000005640">
    <property type="component" value="Chromosome 1"/>
</dbReference>
<dbReference type="RNAct" id="Q96BD6">
    <property type="molecule type" value="protein"/>
</dbReference>
<dbReference type="Bgee" id="ENSG00000171621">
    <property type="expression patterns" value="Expressed in decidua and 173 other cell types or tissues"/>
</dbReference>
<dbReference type="ExpressionAtlas" id="Q96BD6">
    <property type="expression patterns" value="baseline and differential"/>
</dbReference>
<dbReference type="GO" id="GO:0005829">
    <property type="term" value="C:cytosol"/>
    <property type="evidence" value="ECO:0000314"/>
    <property type="project" value="UniProtKB"/>
</dbReference>
<dbReference type="GO" id="GO:0019005">
    <property type="term" value="C:SCF ubiquitin ligase complex"/>
    <property type="evidence" value="ECO:0000318"/>
    <property type="project" value="GO_Central"/>
</dbReference>
<dbReference type="GO" id="GO:1990756">
    <property type="term" value="F:ubiquitin-like ligase-substrate adaptor activity"/>
    <property type="evidence" value="ECO:0000353"/>
    <property type="project" value="UniProtKB"/>
</dbReference>
<dbReference type="GO" id="GO:0043161">
    <property type="term" value="P:proteasome-mediated ubiquitin-dependent protein catabolic process"/>
    <property type="evidence" value="ECO:0000318"/>
    <property type="project" value="GO_Central"/>
</dbReference>
<dbReference type="GO" id="GO:0016567">
    <property type="term" value="P:protein ubiquitination"/>
    <property type="evidence" value="ECO:0000314"/>
    <property type="project" value="UniProtKB"/>
</dbReference>
<dbReference type="GO" id="GO:0006511">
    <property type="term" value="P:ubiquitin-dependent protein catabolic process"/>
    <property type="evidence" value="ECO:0000314"/>
    <property type="project" value="UniProtKB"/>
</dbReference>
<dbReference type="CDD" id="cd03744">
    <property type="entry name" value="SOCS_SSB1"/>
    <property type="match status" value="1"/>
</dbReference>
<dbReference type="CDD" id="cd12906">
    <property type="entry name" value="SPRY_SOCS1-2-4"/>
    <property type="match status" value="1"/>
</dbReference>
<dbReference type="FunFam" id="1.10.750.20:FF:000001">
    <property type="entry name" value="Ankyrin repeat and SOCS box containing 1"/>
    <property type="match status" value="1"/>
</dbReference>
<dbReference type="FunFam" id="2.60.120.920:FF:000007">
    <property type="entry name" value="SPRY domain-containing SOCS box protein 1"/>
    <property type="match status" value="1"/>
</dbReference>
<dbReference type="Gene3D" id="2.60.120.920">
    <property type="match status" value="1"/>
</dbReference>
<dbReference type="Gene3D" id="1.10.750.20">
    <property type="entry name" value="SOCS box"/>
    <property type="match status" value="1"/>
</dbReference>
<dbReference type="IDEAL" id="IID00343"/>
<dbReference type="InterPro" id="IPR001870">
    <property type="entry name" value="B30.2/SPRY"/>
</dbReference>
<dbReference type="InterPro" id="IPR043136">
    <property type="entry name" value="B30.2/SPRY_sf"/>
</dbReference>
<dbReference type="InterPro" id="IPR013320">
    <property type="entry name" value="ConA-like_dom_sf"/>
</dbReference>
<dbReference type="InterPro" id="IPR050672">
    <property type="entry name" value="FBXO45-Fsn/SPSB_families"/>
</dbReference>
<dbReference type="InterPro" id="IPR001496">
    <property type="entry name" value="SOCS_box"/>
</dbReference>
<dbReference type="InterPro" id="IPR003877">
    <property type="entry name" value="SPRY_dom"/>
</dbReference>
<dbReference type="PANTHER" id="PTHR12245">
    <property type="entry name" value="SPRY DOMAIN CONTAINING SOCS BOX PROTEIN"/>
    <property type="match status" value="1"/>
</dbReference>
<dbReference type="PANTHER" id="PTHR12245:SF8">
    <property type="entry name" value="SPRY DOMAIN-CONTAINING SOCS BOX PROTEIN 1"/>
    <property type="match status" value="1"/>
</dbReference>
<dbReference type="Pfam" id="PF07525">
    <property type="entry name" value="SOCS_box"/>
    <property type="match status" value="1"/>
</dbReference>
<dbReference type="Pfam" id="PF00622">
    <property type="entry name" value="SPRY"/>
    <property type="match status" value="1"/>
</dbReference>
<dbReference type="SMART" id="SM00969">
    <property type="entry name" value="SOCS_box"/>
    <property type="match status" value="1"/>
</dbReference>
<dbReference type="SMART" id="SM00449">
    <property type="entry name" value="SPRY"/>
    <property type="match status" value="1"/>
</dbReference>
<dbReference type="SUPFAM" id="SSF49899">
    <property type="entry name" value="Concanavalin A-like lectins/glucanases"/>
    <property type="match status" value="1"/>
</dbReference>
<dbReference type="PROSITE" id="PS50188">
    <property type="entry name" value="B302_SPRY"/>
    <property type="match status" value="1"/>
</dbReference>
<dbReference type="PROSITE" id="PS50225">
    <property type="entry name" value="SOCS"/>
    <property type="match status" value="1"/>
</dbReference>
<organism>
    <name type="scientific">Homo sapiens</name>
    <name type="common">Human</name>
    <dbReference type="NCBI Taxonomy" id="9606"/>
    <lineage>
        <taxon>Eukaryota</taxon>
        <taxon>Metazoa</taxon>
        <taxon>Chordata</taxon>
        <taxon>Craniata</taxon>
        <taxon>Vertebrata</taxon>
        <taxon>Euteleostomi</taxon>
        <taxon>Mammalia</taxon>
        <taxon>Eutheria</taxon>
        <taxon>Euarchontoglires</taxon>
        <taxon>Primates</taxon>
        <taxon>Haplorrhini</taxon>
        <taxon>Catarrhini</taxon>
        <taxon>Hominidae</taxon>
        <taxon>Homo</taxon>
    </lineage>
</organism>
<proteinExistence type="evidence at protein level"/>